<comment type="function">
    <text evidence="1">Part of the ecpRABCDE operon, which encodes the E.coli common pilus (ECP). ECP is found in both commensal and pathogenic strains and plays a dual role in early-stage biofilm development and host cell recognition (By similarity).</text>
</comment>
<comment type="induction">
    <text evidence="1">Negatively regulated by H-NS. Positively regulated by IHF and EcpR (By similarity).</text>
</comment>
<comment type="similarity">
    <text evidence="3">Belongs to the EcpB/EcpE family.</text>
</comment>
<comment type="sequence caution" evidence="3">
    <conflict type="erroneous initiation">
        <sequence resource="EMBL-CDS" id="AAN78884"/>
    </conflict>
    <text>Extended N-terminus.</text>
</comment>
<gene>
    <name type="primary">ecpB</name>
    <name type="synonym">matC</name>
    <name type="ordered locus">c0403</name>
</gene>
<sequence length="222" mass="24501">MKKHLLPLALLFSGISPAQALDVGDISSFMNSDSSTLSKTIQNSTDSGRLINIRLERLSSPLDDGQVIAMDKPDELLLTPASLLLPAQASEVIRFFYKGPADEKERYYRIVWFDQALSDAQRDNANRSAVATASARIGTILVVAPRQANYHFQYANGSLTNTGNATLRILAYGPCLKAANGKECKENYYLMPGKSRRFTRVDTADNKGRVALWQGDKFIPVK</sequence>
<dbReference type="EMBL" id="AE014075">
    <property type="protein sequence ID" value="AAN78884.1"/>
    <property type="status" value="ALT_INIT"/>
    <property type="molecule type" value="Genomic_DNA"/>
</dbReference>
<dbReference type="RefSeq" id="WP_000716404.1">
    <property type="nucleotide sequence ID" value="NZ_CP051263.1"/>
</dbReference>
<dbReference type="SMR" id="Q8CWC0"/>
<dbReference type="STRING" id="199310.c0403"/>
<dbReference type="KEGG" id="ecc:c0403"/>
<dbReference type="eggNOG" id="COG3121">
    <property type="taxonomic scope" value="Bacteria"/>
</dbReference>
<dbReference type="HOGENOM" id="CLU_106652_0_0_6"/>
<dbReference type="Proteomes" id="UP000001410">
    <property type="component" value="Chromosome"/>
</dbReference>
<dbReference type="Gene3D" id="2.60.40.10">
    <property type="entry name" value="Immunoglobulins"/>
    <property type="match status" value="1"/>
</dbReference>
<dbReference type="InterPro" id="IPR040695">
    <property type="entry name" value="EcpB_C"/>
</dbReference>
<dbReference type="InterPro" id="IPR013783">
    <property type="entry name" value="Ig-like_fold"/>
</dbReference>
<dbReference type="InterPro" id="IPR008962">
    <property type="entry name" value="PapD-like_sf"/>
</dbReference>
<dbReference type="Pfam" id="PF18649">
    <property type="entry name" value="EcpB_C"/>
    <property type="match status" value="1"/>
</dbReference>
<dbReference type="SUPFAM" id="SSF49354">
    <property type="entry name" value="PapD-like"/>
    <property type="match status" value="1"/>
</dbReference>
<organism>
    <name type="scientific">Escherichia coli O6:H1 (strain CFT073 / ATCC 700928 / UPEC)</name>
    <dbReference type="NCBI Taxonomy" id="199310"/>
    <lineage>
        <taxon>Bacteria</taxon>
        <taxon>Pseudomonadati</taxon>
        <taxon>Pseudomonadota</taxon>
        <taxon>Gammaproteobacteria</taxon>
        <taxon>Enterobacterales</taxon>
        <taxon>Enterobacteriaceae</taxon>
        <taxon>Escherichia</taxon>
    </lineage>
</organism>
<reference key="1">
    <citation type="journal article" date="2002" name="Proc. Natl. Acad. Sci. U.S.A.">
        <title>Extensive mosaic structure revealed by the complete genome sequence of uropathogenic Escherichia coli.</title>
        <authorList>
            <person name="Welch R.A."/>
            <person name="Burland V."/>
            <person name="Plunkett G. III"/>
            <person name="Redford P."/>
            <person name="Roesch P."/>
            <person name="Rasko D."/>
            <person name="Buckles E.L."/>
            <person name="Liou S.-R."/>
            <person name="Boutin A."/>
            <person name="Hackett J."/>
            <person name="Stroud D."/>
            <person name="Mayhew G.F."/>
            <person name="Rose D.J."/>
            <person name="Zhou S."/>
            <person name="Schwartz D.C."/>
            <person name="Perna N.T."/>
            <person name="Mobley H.L.T."/>
            <person name="Donnenberg M.S."/>
            <person name="Blattner F.R."/>
        </authorList>
    </citation>
    <scope>NUCLEOTIDE SEQUENCE [LARGE SCALE GENOMIC DNA]</scope>
    <source>
        <strain>CFT073 / ATCC 700928 / UPEC</strain>
    </source>
</reference>
<evidence type="ECO:0000250" key="1"/>
<evidence type="ECO:0000255" key="2"/>
<evidence type="ECO:0000305" key="3"/>
<feature type="signal peptide" evidence="2">
    <location>
        <begin position="1"/>
        <end position="20"/>
    </location>
</feature>
<feature type="chain" id="PRO_0000369165" description="Probable fimbrial chaperone EcpB">
    <location>
        <begin position="21"/>
        <end position="222"/>
    </location>
</feature>
<name>ECPB_ECOL6</name>
<proteinExistence type="inferred from homology"/>
<keyword id="KW-0143">Chaperone</keyword>
<keyword id="KW-1029">Fimbrium biogenesis</keyword>
<keyword id="KW-1185">Reference proteome</keyword>
<keyword id="KW-0732">Signal</keyword>
<accession>Q8CWC0</accession>
<protein>
    <recommendedName>
        <fullName>Probable fimbrial chaperone EcpB</fullName>
    </recommendedName>
</protein>